<evidence type="ECO:0000250" key="1"/>
<evidence type="ECO:0000250" key="2">
    <source>
        <dbReference type="UniProtKB" id="Q6URK4"/>
    </source>
</evidence>
<evidence type="ECO:0000250" key="3">
    <source>
        <dbReference type="UniProtKB" id="Q8BG05"/>
    </source>
</evidence>
<evidence type="ECO:0000255" key="4">
    <source>
        <dbReference type="PROSITE-ProRule" id="PRU00176"/>
    </source>
</evidence>
<evidence type="ECO:0000256" key="5">
    <source>
        <dbReference type="SAM" id="MobiDB-lite"/>
    </source>
</evidence>
<evidence type="ECO:0000269" key="6">
    <source>
    </source>
</evidence>
<evidence type="ECO:0000269" key="7">
    <source>
    </source>
</evidence>
<evidence type="ECO:0000269" key="8">
    <source ref="6"/>
</evidence>
<evidence type="ECO:0000303" key="9">
    <source>
    </source>
</evidence>
<evidence type="ECO:0000305" key="10"/>
<evidence type="ECO:0007744" key="11">
    <source>
    </source>
</evidence>
<evidence type="ECO:0007744" key="12">
    <source>
    </source>
</evidence>
<evidence type="ECO:0007744" key="13">
    <source>
    </source>
</evidence>
<evidence type="ECO:0007744" key="14">
    <source>
    </source>
</evidence>
<evidence type="ECO:0007744" key="15">
    <source>
    </source>
</evidence>
<evidence type="ECO:0007744" key="16">
    <source>
    </source>
</evidence>
<evidence type="ECO:0007744" key="17">
    <source>
    </source>
</evidence>
<evidence type="ECO:0007744" key="18">
    <source>
    </source>
</evidence>
<evidence type="ECO:0007744" key="19">
    <source>
    </source>
</evidence>
<evidence type="ECO:0007744" key="20">
    <source>
    </source>
</evidence>
<accession>P51991</accession>
<accession>D3DPF4</accession>
<accession>Q53RW7</accession>
<accession>Q6URK5</accession>
<organism>
    <name type="scientific">Homo sapiens</name>
    <name type="common">Human</name>
    <dbReference type="NCBI Taxonomy" id="9606"/>
    <lineage>
        <taxon>Eukaryota</taxon>
        <taxon>Metazoa</taxon>
        <taxon>Chordata</taxon>
        <taxon>Craniata</taxon>
        <taxon>Vertebrata</taxon>
        <taxon>Euteleostomi</taxon>
        <taxon>Mammalia</taxon>
        <taxon>Eutheria</taxon>
        <taxon>Euarchontoglires</taxon>
        <taxon>Primates</taxon>
        <taxon>Haplorrhini</taxon>
        <taxon>Catarrhini</taxon>
        <taxon>Hominidae</taxon>
        <taxon>Homo</taxon>
    </lineage>
</organism>
<comment type="function">
    <text evidence="6">Plays a role in cytoplasmic trafficking of RNA. Binds to the cis-acting response element, A2RE. May be involved in pre-mRNA splicing.</text>
</comment>
<comment type="subunit">
    <text evidence="7">Identified in the spliceosome C complex.</text>
</comment>
<comment type="interaction">
    <interactant intactId="EBI-1050760">
        <id>P51991</id>
    </interactant>
    <interactant intactId="EBI-352662">
        <id>P09651</id>
        <label>HNRNPA1</label>
    </interactant>
    <organismsDiffer>false</organismsDiffer>
    <experiments>2</experiments>
</comment>
<comment type="interaction">
    <interactant intactId="EBI-1050760">
        <id>P51991</id>
    </interactant>
    <interactant intactId="EBI-299649">
        <id>P22626</id>
        <label>HNRNPA2B1</label>
    </interactant>
    <organismsDiffer>false</organismsDiffer>
    <experiments>2</experiments>
</comment>
<comment type="subcellular location">
    <subcellularLocation>
        <location evidence="1">Nucleus</location>
    </subcellularLocation>
    <text>Component of ribonucleosomes.</text>
</comment>
<comment type="alternative products">
    <event type="alternative splicing"/>
    <isoform>
        <id>P51991-1</id>
        <name>1</name>
        <sequence type="displayed"/>
    </isoform>
    <isoform>
        <id>P51991-2</id>
        <name>2</name>
        <sequence type="described" ref="VSP_011418"/>
    </isoform>
</comment>
<comment type="caution">
    <text evidence="10">An older version of this entry represented the conceptual translation of what was thought to be HNRNPA3 but which was in fact a pseudogene (HNRPA3P1/FBRNP) located on chromosome 10.</text>
</comment>
<feature type="chain" id="PRO_0000081838" description="Heterogeneous nuclear ribonucleoprotein A3">
    <location>
        <begin position="1"/>
        <end position="378"/>
    </location>
</feature>
<feature type="domain" description="RRM 1" evidence="4">
    <location>
        <begin position="35"/>
        <end position="118"/>
    </location>
</feature>
<feature type="domain" description="RRM 2" evidence="4">
    <location>
        <begin position="126"/>
        <end position="205"/>
    </location>
</feature>
<feature type="region of interest" description="Disordered" evidence="5">
    <location>
        <begin position="1"/>
        <end position="34"/>
    </location>
</feature>
<feature type="region of interest" description="Disordered" evidence="5">
    <location>
        <begin position="204"/>
        <end position="225"/>
    </location>
</feature>
<feature type="region of interest" description="Disordered" evidence="5">
    <location>
        <begin position="336"/>
        <end position="378"/>
    </location>
</feature>
<feature type="compositionally biased region" description="Pro residues" evidence="5">
    <location>
        <begin position="1"/>
        <end position="10"/>
    </location>
</feature>
<feature type="compositionally biased region" description="Basic and acidic residues" evidence="5">
    <location>
        <begin position="21"/>
        <end position="34"/>
    </location>
</feature>
<feature type="compositionally biased region" description="Gly residues" evidence="5">
    <location>
        <begin position="214"/>
        <end position="225"/>
    </location>
</feature>
<feature type="compositionally biased region" description="Gly residues" evidence="5">
    <location>
        <begin position="346"/>
        <end position="378"/>
    </location>
</feature>
<feature type="modified residue" description="N-acetylmethionine" evidence="19">
    <location>
        <position position="1"/>
    </location>
</feature>
<feature type="modified residue" description="Phosphoserine" evidence="15 17">
    <location>
        <position position="14"/>
    </location>
</feature>
<feature type="modified residue" description="Phosphoserine" evidence="17">
    <location>
        <position position="43"/>
    </location>
</feature>
<feature type="modified residue" description="Dimethylated arginine; alternate" evidence="8">
    <location>
        <position position="52"/>
    </location>
</feature>
<feature type="modified residue" description="Omega-N-methylarginine; alternate" evidence="8">
    <location>
        <position position="52"/>
    </location>
</feature>
<feature type="modified residue" description="Omega-N-methylarginine" evidence="16">
    <location>
        <position position="76"/>
    </location>
</feature>
<feature type="modified residue" description="Phosphoserine" evidence="15">
    <location>
        <position position="112"/>
    </location>
</feature>
<feature type="modified residue" description="Phosphoserine" evidence="15 17">
    <location>
        <position position="116"/>
    </location>
</feature>
<feature type="modified residue" description="Phosphothreonine" evidence="17">
    <location>
        <position position="124"/>
    </location>
</feature>
<feature type="modified residue" description="N6-acetyllysine; alternate" evidence="12">
    <location>
        <position position="134"/>
    </location>
</feature>
<feature type="modified residue" description="Asymmetric dimethylarginine; alternate" evidence="2">
    <location>
        <position position="214"/>
    </location>
</feature>
<feature type="modified residue" description="Omega-N-methylarginine; alternate" evidence="16">
    <location>
        <position position="214"/>
    </location>
</feature>
<feature type="modified residue" description="Asymmetric dimethylarginine; alternate" evidence="2">
    <location>
        <position position="216"/>
    </location>
</feature>
<feature type="modified residue" description="Omega-N-methylarginine; alternate" evidence="16">
    <location>
        <position position="216"/>
    </location>
</feature>
<feature type="modified residue" description="Asymmetric dimethylarginine; alternate" evidence="3">
    <location>
        <position position="226"/>
    </location>
</feature>
<feature type="modified residue" description="Omega-N-methylarginine; alternate" evidence="16">
    <location>
        <position position="226"/>
    </location>
</feature>
<feature type="modified residue" description="Asymmetric dimethylarginine; alternate" evidence="16">
    <location>
        <position position="239"/>
    </location>
</feature>
<feature type="modified residue" description="Omega-N-methylarginine; alternate" evidence="3">
    <location>
        <position position="239"/>
    </location>
</feature>
<feature type="modified residue" description="Asymmetric dimethylarginine; alternate" evidence="8 16">
    <location>
        <position position="246"/>
    </location>
</feature>
<feature type="modified residue" description="Omega-N-methylarginine; alternate" evidence="16">
    <location>
        <position position="246"/>
    </location>
</feature>
<feature type="modified residue" description="Omega-N-methylarginine" evidence="3">
    <location>
        <position position="257"/>
    </location>
</feature>
<feature type="modified residue" description="Asymmetric dimethylarginine" evidence="2">
    <location>
        <position position="286"/>
    </location>
</feature>
<feature type="modified residue" description="Phosphoserine" evidence="14">
    <location>
        <position position="350"/>
    </location>
</feature>
<feature type="modified residue" description="Omega-N-methylarginine" evidence="16">
    <location>
        <position position="354"/>
    </location>
</feature>
<feature type="modified residue" description="Phosphoserine" evidence="13 14 15 17">
    <location>
        <position position="358"/>
    </location>
</feature>
<feature type="modified residue" description="Phosphotyrosine" evidence="11 13 17">
    <location>
        <position position="360"/>
    </location>
</feature>
<feature type="modified residue" description="Phosphotyrosine" evidence="13 17">
    <location>
        <position position="364"/>
    </location>
</feature>
<feature type="modified residue" description="Phosphoserine" evidence="11 13 14 15 17">
    <location>
        <position position="366"/>
    </location>
</feature>
<feature type="modified residue" description="Phosphoserine" evidence="13 15">
    <location>
        <position position="370"/>
    </location>
</feature>
<feature type="modified residue" description="Phosphotyrosine" evidence="15">
    <location>
        <position position="373"/>
    </location>
</feature>
<feature type="modified residue" description="Phosphoserine" evidence="15">
    <location>
        <position position="375"/>
    </location>
</feature>
<feature type="cross-link" description="Glycyl lysine isopeptide (Lys-Gly) (interchain with G-Cter in SUMO2)" evidence="18 20">
    <location>
        <position position="4"/>
    </location>
</feature>
<feature type="cross-link" description="Glycyl lysine isopeptide (Lys-Gly) (interchain with G-Cter in SUMO2)" evidence="20">
    <location>
        <position position="36"/>
    </location>
</feature>
<feature type="cross-link" description="Glycyl lysine isopeptide (Lys-Gly) (interchain with G-Cter in SUMO2)" evidence="20">
    <location>
        <position position="118"/>
    </location>
</feature>
<feature type="cross-link" description="Glycyl lysine isopeptide (Lys-Gly) (interchain with G-Cter in SUMO2); alternate" evidence="20">
    <location>
        <position position="134"/>
    </location>
</feature>
<feature type="cross-link" description="Glycyl lysine isopeptide (Lys-Gly) (interchain with G-Cter in SUMO2)" evidence="20">
    <location>
        <position position="151"/>
    </location>
</feature>
<feature type="cross-link" description="Glycyl lysine isopeptide (Lys-Gly) (interchain with G-Cter in SUMO2)" evidence="20">
    <location>
        <position position="182"/>
    </location>
</feature>
<feature type="splice variant" id="VSP_011418" description="In isoform 2." evidence="9">
    <original>MEVKPPPGRPQPDSGRRRRRRGE</original>
    <variation>M</variation>
    <location>
        <begin position="1"/>
        <end position="23"/>
    </location>
</feature>
<proteinExistence type="evidence at protein level"/>
<reference key="1">
    <citation type="journal article" date="2002" name="J. Biol. Chem.">
        <title>Heterogeneous nuclear ribonucleoprotein A3, a novel RNA trafficking response element-binding protein.</title>
        <authorList>
            <person name="Ma A.S.W."/>
            <person name="Moran-Jones K."/>
            <person name="Shan J."/>
            <person name="Munro T.P."/>
            <person name="Snee M.J."/>
            <person name="Hoek K.S."/>
            <person name="Smith R."/>
        </authorList>
    </citation>
    <scope>NUCLEOTIDE SEQUENCE [MRNA] (ISOFORMS 1 AND 2)</scope>
    <scope>FUNCTION</scope>
    <source>
        <tissue>Brain</tissue>
    </source>
</reference>
<reference key="2">
    <citation type="journal article" date="2005" name="Nature">
        <title>Generation and annotation of the DNA sequences of human chromosomes 2 and 4.</title>
        <authorList>
            <person name="Hillier L.W."/>
            <person name="Graves T.A."/>
            <person name="Fulton R.S."/>
            <person name="Fulton L.A."/>
            <person name="Pepin K.H."/>
            <person name="Minx P."/>
            <person name="Wagner-McPherson C."/>
            <person name="Layman D."/>
            <person name="Wylie K."/>
            <person name="Sekhon M."/>
            <person name="Becker M.C."/>
            <person name="Fewell G.A."/>
            <person name="Delehaunty K.D."/>
            <person name="Miner T.L."/>
            <person name="Nash W.E."/>
            <person name="Kremitzki C."/>
            <person name="Oddy L."/>
            <person name="Du H."/>
            <person name="Sun H."/>
            <person name="Bradshaw-Cordum H."/>
            <person name="Ali J."/>
            <person name="Carter J."/>
            <person name="Cordes M."/>
            <person name="Harris A."/>
            <person name="Isak A."/>
            <person name="van Brunt A."/>
            <person name="Nguyen C."/>
            <person name="Du F."/>
            <person name="Courtney L."/>
            <person name="Kalicki J."/>
            <person name="Ozersky P."/>
            <person name="Abbott S."/>
            <person name="Armstrong J."/>
            <person name="Belter E.A."/>
            <person name="Caruso L."/>
            <person name="Cedroni M."/>
            <person name="Cotton M."/>
            <person name="Davidson T."/>
            <person name="Desai A."/>
            <person name="Elliott G."/>
            <person name="Erb T."/>
            <person name="Fronick C."/>
            <person name="Gaige T."/>
            <person name="Haakenson W."/>
            <person name="Haglund K."/>
            <person name="Holmes A."/>
            <person name="Harkins R."/>
            <person name="Kim K."/>
            <person name="Kruchowski S.S."/>
            <person name="Strong C.M."/>
            <person name="Grewal N."/>
            <person name="Goyea E."/>
            <person name="Hou S."/>
            <person name="Levy A."/>
            <person name="Martinka S."/>
            <person name="Mead K."/>
            <person name="McLellan M.D."/>
            <person name="Meyer R."/>
            <person name="Randall-Maher J."/>
            <person name="Tomlinson C."/>
            <person name="Dauphin-Kohlberg S."/>
            <person name="Kozlowicz-Reilly A."/>
            <person name="Shah N."/>
            <person name="Swearengen-Shahid S."/>
            <person name="Snider J."/>
            <person name="Strong J.T."/>
            <person name="Thompson J."/>
            <person name="Yoakum M."/>
            <person name="Leonard S."/>
            <person name="Pearman C."/>
            <person name="Trani L."/>
            <person name="Radionenko M."/>
            <person name="Waligorski J.E."/>
            <person name="Wang C."/>
            <person name="Rock S.M."/>
            <person name="Tin-Wollam A.-M."/>
            <person name="Maupin R."/>
            <person name="Latreille P."/>
            <person name="Wendl M.C."/>
            <person name="Yang S.-P."/>
            <person name="Pohl C."/>
            <person name="Wallis J.W."/>
            <person name="Spieth J."/>
            <person name="Bieri T.A."/>
            <person name="Berkowicz N."/>
            <person name="Nelson J.O."/>
            <person name="Osborne J."/>
            <person name="Ding L."/>
            <person name="Meyer R."/>
            <person name="Sabo A."/>
            <person name="Shotland Y."/>
            <person name="Sinha P."/>
            <person name="Wohldmann P.E."/>
            <person name="Cook L.L."/>
            <person name="Hickenbotham M.T."/>
            <person name="Eldred J."/>
            <person name="Williams D."/>
            <person name="Jones T.A."/>
            <person name="She X."/>
            <person name="Ciccarelli F.D."/>
            <person name="Izaurralde E."/>
            <person name="Taylor J."/>
            <person name="Schmutz J."/>
            <person name="Myers R.M."/>
            <person name="Cox D.R."/>
            <person name="Huang X."/>
            <person name="McPherson J.D."/>
            <person name="Mardis E.R."/>
            <person name="Clifton S.W."/>
            <person name="Warren W.C."/>
            <person name="Chinwalla A.T."/>
            <person name="Eddy S.R."/>
            <person name="Marra M.A."/>
            <person name="Ovcharenko I."/>
            <person name="Furey T.S."/>
            <person name="Miller W."/>
            <person name="Eichler E.E."/>
            <person name="Bork P."/>
            <person name="Suyama M."/>
            <person name="Torrents D."/>
            <person name="Waterston R.H."/>
            <person name="Wilson R.K."/>
        </authorList>
    </citation>
    <scope>NUCLEOTIDE SEQUENCE [LARGE SCALE GENOMIC DNA]</scope>
</reference>
<reference key="3">
    <citation type="submission" date="2005-09" db="EMBL/GenBank/DDBJ databases">
        <authorList>
            <person name="Mural R.J."/>
            <person name="Istrail S."/>
            <person name="Sutton G.G."/>
            <person name="Florea L."/>
            <person name="Halpern A.L."/>
            <person name="Mobarry C.M."/>
            <person name="Lippert R."/>
            <person name="Walenz B."/>
            <person name="Shatkay H."/>
            <person name="Dew I."/>
            <person name="Miller J.R."/>
            <person name="Flanigan M.J."/>
            <person name="Edwards N.J."/>
            <person name="Bolanos R."/>
            <person name="Fasulo D."/>
            <person name="Halldorsson B.V."/>
            <person name="Hannenhalli S."/>
            <person name="Turner R."/>
            <person name="Yooseph S."/>
            <person name="Lu F."/>
            <person name="Nusskern D.R."/>
            <person name="Shue B.C."/>
            <person name="Zheng X.H."/>
            <person name="Zhong F."/>
            <person name="Delcher A.L."/>
            <person name="Huson D.H."/>
            <person name="Kravitz S.A."/>
            <person name="Mouchard L."/>
            <person name="Reinert K."/>
            <person name="Remington K.A."/>
            <person name="Clark A.G."/>
            <person name="Waterman M.S."/>
            <person name="Eichler E.E."/>
            <person name="Adams M.D."/>
            <person name="Hunkapiller M.W."/>
            <person name="Myers E.W."/>
            <person name="Venter J.C."/>
        </authorList>
    </citation>
    <scope>NUCLEOTIDE SEQUENCE [LARGE SCALE GENOMIC DNA]</scope>
</reference>
<reference key="4">
    <citation type="journal article" date="2004" name="Genome Res.">
        <title>The status, quality, and expansion of the NIH full-length cDNA project: the Mammalian Gene Collection (MGC).</title>
        <authorList>
            <consortium name="The MGC Project Team"/>
        </authorList>
    </citation>
    <scope>NUCLEOTIDE SEQUENCE [LARGE SCALE MRNA] (ISOFORM 1)</scope>
    <source>
        <tissue>Brain</tissue>
    </source>
</reference>
<reference key="5">
    <citation type="submission" date="2008-12" db="UniProtKB">
        <authorList>
            <person name="Lubec G."/>
            <person name="Afjehi-Sadat L."/>
            <person name="Chen W.-Q."/>
            <person name="Sun Y."/>
        </authorList>
    </citation>
    <scope>PROTEIN SEQUENCE OF 36-52; 58-68; 128-143; 152-161 AND 355-376</scope>
    <scope>IDENTIFICATION BY MASS SPECTROMETRY</scope>
    <source>
        <tissue>Brain</tissue>
        <tissue>Cajal-Retzius cell</tissue>
        <tissue>Fetal brain cortex</tissue>
    </source>
</reference>
<reference key="6">
    <citation type="submission" date="2008-12" db="UniProtKB">
        <authorList>
            <person name="Bienvenut W.V."/>
            <person name="Lilla S."/>
            <person name="von Kriegsheim A."/>
            <person name="Lempens A."/>
            <person name="Kolch W."/>
        </authorList>
    </citation>
    <scope>PROTEIN SEQUENCE OF 36-73; 114-161; 167-187; 240-257 AND 355-376</scope>
    <scope>METHYLATION AT ARG-52 AND ARG-246</scope>
    <scope>IDENTIFICATION BY MASS SPECTROMETRY</scope>
    <source>
        <tissue>Ovarian carcinoma</tissue>
    </source>
</reference>
<reference key="7">
    <citation type="journal article" date="2002" name="RNA">
        <title>Purification and characterization of native spliceosomes suitable for three-dimensional structural analysis.</title>
        <authorList>
            <person name="Jurica M.S."/>
            <person name="Licklider L.J."/>
            <person name="Gygi S.P."/>
            <person name="Grigorieff N."/>
            <person name="Moore M.J."/>
        </authorList>
    </citation>
    <scope>IDENTIFICATION BY MASS SPECTROMETRY</scope>
    <scope>IDENTIFICATION IN THE SPLICEOSOMAL C COMPLEX</scope>
</reference>
<reference key="8">
    <citation type="journal article" date="2003" name="Nature">
        <title>Proteomic characterization of the human centrosome by protein correlation profiling.</title>
        <authorList>
            <person name="Andersen J.S."/>
            <person name="Wilkinson C.J."/>
            <person name="Mayor T."/>
            <person name="Mortensen P."/>
            <person name="Nigg E.A."/>
            <person name="Mann M."/>
        </authorList>
    </citation>
    <scope>IDENTIFICATION BY MASS SPECTROMETRY</scope>
    <source>
        <tissue>Lymphoblast</tissue>
    </source>
</reference>
<reference key="9">
    <citation type="journal article" date="2006" name="Nat. Biotechnol.">
        <title>A probability-based approach for high-throughput protein phosphorylation analysis and site localization.</title>
        <authorList>
            <person name="Beausoleil S.A."/>
            <person name="Villen J."/>
            <person name="Gerber S.A."/>
            <person name="Rush J."/>
            <person name="Gygi S.P."/>
        </authorList>
    </citation>
    <scope>IDENTIFICATION BY MASS SPECTROMETRY [LARGE SCALE ANALYSIS]</scope>
    <source>
        <tissue>Cervix carcinoma</tissue>
    </source>
</reference>
<reference key="10">
    <citation type="journal article" date="2007" name="Electrophoresis">
        <title>Toward a global characterization of the phosphoproteome in prostate cancer cells: identification of phosphoproteins in the LNCaP cell line.</title>
        <authorList>
            <person name="Giorgianni F."/>
            <person name="Zhao Y."/>
            <person name="Desiderio D.M."/>
            <person name="Beranova-Giorgianni S."/>
        </authorList>
    </citation>
    <scope>IDENTIFICATION BY MASS SPECTROMETRY [LARGE SCALE ANALYSIS]</scope>
    <source>
        <tissue>Prostate cancer</tissue>
    </source>
</reference>
<reference key="11">
    <citation type="journal article" date="2008" name="J. Proteome Res.">
        <title>Combining protein-based IMAC, peptide-based IMAC, and MudPIT for efficient phosphoproteomic analysis.</title>
        <authorList>
            <person name="Cantin G.T."/>
            <person name="Yi W."/>
            <person name="Lu B."/>
            <person name="Park S.K."/>
            <person name="Xu T."/>
            <person name="Lee J.-D."/>
            <person name="Yates J.R. III"/>
        </authorList>
    </citation>
    <scope>IDENTIFICATION BY MASS SPECTROMETRY [LARGE SCALE ANALYSIS]</scope>
    <source>
        <tissue>Cervix carcinoma</tissue>
    </source>
</reference>
<reference key="12">
    <citation type="journal article" date="2008" name="Mol. Cell">
        <title>Kinase-selective enrichment enables quantitative phosphoproteomics of the kinome across the cell cycle.</title>
        <authorList>
            <person name="Daub H."/>
            <person name="Olsen J.V."/>
            <person name="Bairlein M."/>
            <person name="Gnad F."/>
            <person name="Oppermann F.S."/>
            <person name="Korner R."/>
            <person name="Greff Z."/>
            <person name="Keri G."/>
            <person name="Stemmann O."/>
            <person name="Mann M."/>
        </authorList>
    </citation>
    <scope>IDENTIFICATION BY MASS SPECTROMETRY [LARGE SCALE ANALYSIS]</scope>
    <source>
        <tissue>Cervix carcinoma</tissue>
    </source>
</reference>
<reference key="13">
    <citation type="journal article" date="2008" name="Proc. Natl. Acad. Sci. U.S.A.">
        <title>A quantitative atlas of mitotic phosphorylation.</title>
        <authorList>
            <person name="Dephoure N."/>
            <person name="Zhou C."/>
            <person name="Villen J."/>
            <person name="Beausoleil S.A."/>
            <person name="Bakalarski C.E."/>
            <person name="Elledge S.J."/>
            <person name="Gygi S.P."/>
        </authorList>
    </citation>
    <scope>PHOSPHORYLATION [LARGE SCALE ANALYSIS] AT TYR-360 AND SER-366</scope>
    <scope>IDENTIFICATION BY MASS SPECTROMETRY [LARGE SCALE ANALYSIS]</scope>
    <source>
        <tissue>Cervix carcinoma</tissue>
    </source>
</reference>
<reference key="14">
    <citation type="journal article" date="2009" name="Anal. Chem.">
        <title>Lys-N and trypsin cover complementary parts of the phosphoproteome in a refined SCX-based approach.</title>
        <authorList>
            <person name="Gauci S."/>
            <person name="Helbig A.O."/>
            <person name="Slijper M."/>
            <person name="Krijgsveld J."/>
            <person name="Heck A.J."/>
            <person name="Mohammed S."/>
        </authorList>
    </citation>
    <scope>IDENTIFICATION BY MASS SPECTROMETRY [LARGE SCALE ANALYSIS]</scope>
</reference>
<reference key="15">
    <citation type="journal article" date="2009" name="Sci. Signal.">
        <title>Quantitative phosphoproteomic analysis of T cell receptor signaling reveals system-wide modulation of protein-protein interactions.</title>
        <authorList>
            <person name="Mayya V."/>
            <person name="Lundgren D.H."/>
            <person name="Hwang S.-I."/>
            <person name="Rezaul K."/>
            <person name="Wu L."/>
            <person name="Eng J.K."/>
            <person name="Rodionov V."/>
            <person name="Han D.K."/>
        </authorList>
    </citation>
    <scope>PHOSPHORYLATION [LARGE SCALE ANALYSIS] AT SER-358; TYR-360; TYR-364; SER-366 AND SER-370</scope>
    <scope>IDENTIFICATION BY MASS SPECTROMETRY [LARGE SCALE ANALYSIS]</scope>
    <source>
        <tissue>Leukemic T-cell</tissue>
    </source>
</reference>
<reference key="16">
    <citation type="journal article" date="2009" name="Science">
        <title>Lysine acetylation targets protein complexes and co-regulates major cellular functions.</title>
        <authorList>
            <person name="Choudhary C."/>
            <person name="Kumar C."/>
            <person name="Gnad F."/>
            <person name="Nielsen M.L."/>
            <person name="Rehman M."/>
            <person name="Walther T.C."/>
            <person name="Olsen J.V."/>
            <person name="Mann M."/>
        </authorList>
    </citation>
    <scope>ACETYLATION [LARGE SCALE ANALYSIS] AT LYS-134</scope>
    <scope>IDENTIFICATION BY MASS SPECTROMETRY [LARGE SCALE ANALYSIS]</scope>
</reference>
<reference key="17">
    <citation type="journal article" date="2010" name="Sci. Signal.">
        <title>Quantitative phosphoproteomics reveals widespread full phosphorylation site occupancy during mitosis.</title>
        <authorList>
            <person name="Olsen J.V."/>
            <person name="Vermeulen M."/>
            <person name="Santamaria A."/>
            <person name="Kumar C."/>
            <person name="Miller M.L."/>
            <person name="Jensen L.J."/>
            <person name="Gnad F."/>
            <person name="Cox J."/>
            <person name="Jensen T.S."/>
            <person name="Nigg E.A."/>
            <person name="Brunak S."/>
            <person name="Mann M."/>
        </authorList>
    </citation>
    <scope>IDENTIFICATION BY MASS SPECTROMETRY [LARGE SCALE ANALYSIS]</scope>
    <source>
        <tissue>Cervix carcinoma</tissue>
    </source>
</reference>
<reference key="18">
    <citation type="journal article" date="2011" name="BMC Syst. Biol.">
        <title>Initial characterization of the human central proteome.</title>
        <authorList>
            <person name="Burkard T.R."/>
            <person name="Planyavsky M."/>
            <person name="Kaupe I."/>
            <person name="Breitwieser F.P."/>
            <person name="Buerckstuemmer T."/>
            <person name="Bennett K.L."/>
            <person name="Superti-Furga G."/>
            <person name="Colinge J."/>
        </authorList>
    </citation>
    <scope>IDENTIFICATION BY MASS SPECTROMETRY [LARGE SCALE ANALYSIS]</scope>
</reference>
<reference key="19">
    <citation type="journal article" date="2011" name="Sci. Signal.">
        <title>System-wide temporal characterization of the proteome and phosphoproteome of human embryonic stem cell differentiation.</title>
        <authorList>
            <person name="Rigbolt K.T."/>
            <person name="Prokhorova T.A."/>
            <person name="Akimov V."/>
            <person name="Henningsen J."/>
            <person name="Johansen P.T."/>
            <person name="Kratchmarova I."/>
            <person name="Kassem M."/>
            <person name="Mann M."/>
            <person name="Olsen J.V."/>
            <person name="Blagoev B."/>
        </authorList>
    </citation>
    <scope>PHOSPHORYLATION [LARGE SCALE ANALYSIS] AT SER-350; SER-358 AND SER-366</scope>
    <scope>IDENTIFICATION BY MASS SPECTROMETRY [LARGE SCALE ANALYSIS]</scope>
</reference>
<reference key="20">
    <citation type="journal article" date="2013" name="J. Proteome Res.">
        <title>Toward a comprehensive characterization of a human cancer cell phosphoproteome.</title>
        <authorList>
            <person name="Zhou H."/>
            <person name="Di Palma S."/>
            <person name="Preisinger C."/>
            <person name="Peng M."/>
            <person name="Polat A.N."/>
            <person name="Heck A.J."/>
            <person name="Mohammed S."/>
        </authorList>
    </citation>
    <scope>PHOSPHORYLATION [LARGE SCALE ANALYSIS] AT SER-14; SER-112; SER-116; SER-358; SER-366; SER-370; TYR-373 AND SER-375</scope>
    <scope>IDENTIFICATION BY MASS SPECTROMETRY [LARGE SCALE ANALYSIS]</scope>
    <source>
        <tissue>Cervix carcinoma</tissue>
        <tissue>Erythroleukemia</tissue>
    </source>
</reference>
<reference key="21">
    <citation type="journal article" date="2014" name="J. Proteomics">
        <title>An enzyme assisted RP-RPLC approach for in-depth analysis of human liver phosphoproteome.</title>
        <authorList>
            <person name="Bian Y."/>
            <person name="Song C."/>
            <person name="Cheng K."/>
            <person name="Dong M."/>
            <person name="Wang F."/>
            <person name="Huang J."/>
            <person name="Sun D."/>
            <person name="Wang L."/>
            <person name="Ye M."/>
            <person name="Zou H."/>
        </authorList>
    </citation>
    <scope>PHOSPHORYLATION [LARGE SCALE ANALYSIS] AT SER-14; SER-43; SER-116; THR-124; SER-358; TYR-360; TYR-364 AND SER-366</scope>
    <scope>IDENTIFICATION BY MASS SPECTROMETRY [LARGE SCALE ANALYSIS]</scope>
    <source>
        <tissue>Liver</tissue>
    </source>
</reference>
<reference key="22">
    <citation type="journal article" date="2014" name="Mol. Cell. Proteomics">
        <title>Immunoaffinity enrichment and mass spectrometry analysis of protein methylation.</title>
        <authorList>
            <person name="Guo A."/>
            <person name="Gu H."/>
            <person name="Zhou J."/>
            <person name="Mulhern D."/>
            <person name="Wang Y."/>
            <person name="Lee K.A."/>
            <person name="Yang V."/>
            <person name="Aguiar M."/>
            <person name="Kornhauser J."/>
            <person name="Jia X."/>
            <person name="Ren J."/>
            <person name="Beausoleil S.A."/>
            <person name="Silva J.C."/>
            <person name="Vemulapalli V."/>
            <person name="Bedford M.T."/>
            <person name="Comb M.J."/>
        </authorList>
    </citation>
    <scope>METHYLATION [LARGE SCALE ANALYSIS] AT ARG-76; ARG-214; ARG-216; ARG-226; ARG-239; ARG-246 AND ARG-354</scope>
    <scope>IDENTIFICATION BY MASS SPECTROMETRY [LARGE SCALE ANALYSIS]</scope>
    <source>
        <tissue>Colon carcinoma</tissue>
    </source>
</reference>
<reference key="23">
    <citation type="journal article" date="2014" name="Nat. Struct. Mol. Biol.">
        <title>Uncovering global SUMOylation signaling networks in a site-specific manner.</title>
        <authorList>
            <person name="Hendriks I.A."/>
            <person name="D'Souza R.C."/>
            <person name="Yang B."/>
            <person name="Verlaan-de Vries M."/>
            <person name="Mann M."/>
            <person name="Vertegaal A.C."/>
        </authorList>
    </citation>
    <scope>SUMOYLATION [LARGE SCALE ANALYSIS] AT LYS-4</scope>
    <scope>IDENTIFICATION BY MASS SPECTROMETRY [LARGE SCALE ANALYSIS]</scope>
</reference>
<reference key="24">
    <citation type="journal article" date="2015" name="Proteomics">
        <title>N-terminome analysis of the human mitochondrial proteome.</title>
        <authorList>
            <person name="Vaca Jacome A.S."/>
            <person name="Rabilloud T."/>
            <person name="Schaeffer-Reiss C."/>
            <person name="Rompais M."/>
            <person name="Ayoub D."/>
            <person name="Lane L."/>
            <person name="Bairoch A."/>
            <person name="Van Dorsselaer A."/>
            <person name="Carapito C."/>
        </authorList>
    </citation>
    <scope>ACETYLATION [LARGE SCALE ANALYSIS] AT MET-1</scope>
    <scope>IDENTIFICATION BY MASS SPECTROMETRY [LARGE SCALE ANALYSIS]</scope>
</reference>
<reference key="25">
    <citation type="journal article" date="2017" name="Nat. Struct. Mol. Biol.">
        <title>Site-specific mapping of the human SUMO proteome reveals co-modification with phosphorylation.</title>
        <authorList>
            <person name="Hendriks I.A."/>
            <person name="Lyon D."/>
            <person name="Young C."/>
            <person name="Jensen L.J."/>
            <person name="Vertegaal A.C."/>
            <person name="Nielsen M.L."/>
        </authorList>
    </citation>
    <scope>SUMOYLATION [LARGE SCALE ANALYSIS] AT LYS-4; LYS-36; LYS-118; LYS-134; LYS-151 AND LYS-182</scope>
    <scope>IDENTIFICATION BY MASS SPECTROMETRY [LARGE SCALE ANALYSIS]</scope>
</reference>
<gene>
    <name type="primary">HNRNPA3</name>
    <name type="synonym">HNRPA3</name>
</gene>
<name>ROA3_HUMAN</name>
<sequence length="378" mass="39595">MEVKPPPGRPQPDSGRRRRRRGEEGHDPKEPEQLRKLFIGGLSFETTDDSLREHFEKWGTLTDCVVMRDPQTKRSRGFGFVTYSCVEEVDAAMCARPHKVDGRVVEPKRAVSREDSVKPGAHLTVKKIFVGGIKEDTEEYNLRDYFEKYGKIETIEVMEDRQSGKKRGFAFVTFDDHDTVDKIVVQKYHTINGHNCEVKKALSKQEMQSAGSQRGRGGGSGNFMGRGGNFGGGGGNFGRGGNFGGRGGYGGGGGGSRGSYGGGDGGYNGFGGDGGNYGGGPGYSSRGGYGGGGPGYGNQGGGYGGGGGYDGYNEGGNFGGGNYGGGGNYNDFGNYSGQQQSNYGPMKGGSFGGRSSGSPYGGGYGSGGGSGGYGSRRF</sequence>
<dbReference type="EMBL" id="AY363225">
    <property type="protein sequence ID" value="AAQ63629.1"/>
    <property type="molecule type" value="mRNA"/>
</dbReference>
<dbReference type="EMBL" id="AC079305">
    <property type="protein sequence ID" value="AAY14709.1"/>
    <property type="molecule type" value="Genomic_DNA"/>
</dbReference>
<dbReference type="EMBL" id="CH471058">
    <property type="protein sequence ID" value="EAX11066.1"/>
    <property type="molecule type" value="Genomic_DNA"/>
</dbReference>
<dbReference type="EMBL" id="BC112027">
    <property type="protein sequence ID" value="AAI12028.1"/>
    <property type="molecule type" value="mRNA"/>
</dbReference>
<dbReference type="EMBL" id="BC113470">
    <property type="protein sequence ID" value="AAI13471.1"/>
    <property type="molecule type" value="mRNA"/>
</dbReference>
<dbReference type="CCDS" id="CCDS2273.1">
    <molecule id="P51991-1"/>
</dbReference>
<dbReference type="CCDS" id="CCDS82536.1">
    <molecule id="P51991-2"/>
</dbReference>
<dbReference type="PIR" id="I52962">
    <property type="entry name" value="I52962"/>
</dbReference>
<dbReference type="RefSeq" id="NP_001317176.1">
    <molecule id="P51991-2"/>
    <property type="nucleotide sequence ID" value="NM_001330247.2"/>
</dbReference>
<dbReference type="RefSeq" id="NP_001317177.1">
    <molecule id="P51991-2"/>
    <property type="nucleotide sequence ID" value="NM_001330248.2"/>
</dbReference>
<dbReference type="RefSeq" id="NP_001317178.1">
    <molecule id="P51991-1"/>
    <property type="nucleotide sequence ID" value="NM_001330249.2"/>
</dbReference>
<dbReference type="RefSeq" id="NP_919223.1">
    <molecule id="P51991-1"/>
    <property type="nucleotide sequence ID" value="NM_194247.4"/>
</dbReference>
<dbReference type="SMR" id="P51991"/>
<dbReference type="BioGRID" id="128670">
    <property type="interactions" value="501"/>
</dbReference>
<dbReference type="CORUM" id="P51991"/>
<dbReference type="FunCoup" id="P51991">
    <property type="interactions" value="3931"/>
</dbReference>
<dbReference type="IntAct" id="P51991">
    <property type="interactions" value="150"/>
</dbReference>
<dbReference type="MINT" id="P51991"/>
<dbReference type="STRING" id="9606.ENSP00000376309"/>
<dbReference type="GlyConnect" id="1311">
    <property type="glycosylation" value="1 N-Linked glycan (1 site)"/>
</dbReference>
<dbReference type="GlyCosmos" id="P51991">
    <property type="glycosylation" value="4 sites, 2 glycans"/>
</dbReference>
<dbReference type="GlyGen" id="P51991">
    <property type="glycosylation" value="8 sites, 1 N-linked glycan (1 site), 1 O-linked glycan (7 sites)"/>
</dbReference>
<dbReference type="iPTMnet" id="P51991"/>
<dbReference type="MetOSite" id="P51991"/>
<dbReference type="PhosphoSitePlus" id="P51991"/>
<dbReference type="SwissPalm" id="P51991"/>
<dbReference type="BioMuta" id="HNRNPA3"/>
<dbReference type="DMDM" id="51338779"/>
<dbReference type="jPOST" id="P51991"/>
<dbReference type="MassIVE" id="P51991"/>
<dbReference type="PaxDb" id="9606-ENSP00000376309"/>
<dbReference type="PeptideAtlas" id="P51991"/>
<dbReference type="ProteomicsDB" id="56465">
    <molecule id="P51991-1"/>
</dbReference>
<dbReference type="ProteomicsDB" id="56466">
    <molecule id="P51991-2"/>
</dbReference>
<dbReference type="Pumba" id="P51991"/>
<dbReference type="TopDownProteomics" id="P51991-1">
    <molecule id="P51991-1"/>
</dbReference>
<dbReference type="TopDownProteomics" id="P51991-2">
    <molecule id="P51991-2"/>
</dbReference>
<dbReference type="Antibodypedia" id="19537">
    <property type="antibodies" value="126 antibodies from 23 providers"/>
</dbReference>
<dbReference type="DNASU" id="220988"/>
<dbReference type="Ensembl" id="ENST00000392524.7">
    <molecule id="P51991-1"/>
    <property type="protein sequence ID" value="ENSP00000376309.2"/>
    <property type="gene ID" value="ENSG00000170144.23"/>
</dbReference>
<dbReference type="Ensembl" id="ENST00000411529.6">
    <molecule id="P51991-2"/>
    <property type="protein sequence ID" value="ENSP00000408487.1"/>
    <property type="gene ID" value="ENSG00000170144.23"/>
</dbReference>
<dbReference type="Ensembl" id="ENST00000435711.5">
    <molecule id="P51991-1"/>
    <property type="protein sequence ID" value="ENSP00000416340.1"/>
    <property type="gene ID" value="ENSG00000170144.23"/>
</dbReference>
<dbReference type="Ensembl" id="ENST00000676629.1">
    <molecule id="P51991-1"/>
    <property type="protein sequence ID" value="ENSP00000503593.1"/>
    <property type="gene ID" value="ENSG00000170144.23"/>
</dbReference>
<dbReference type="Ensembl" id="ENST00000676874.1">
    <molecule id="P51991-2"/>
    <property type="protein sequence ID" value="ENSP00000503186.1"/>
    <property type="gene ID" value="ENSG00000170144.23"/>
</dbReference>
<dbReference type="Ensembl" id="ENST00000678111.1">
    <molecule id="P51991-1"/>
    <property type="protein sequence ID" value="ENSP00000504135.1"/>
    <property type="gene ID" value="ENSG00000170144.23"/>
</dbReference>
<dbReference type="Ensembl" id="ENST00000679159.1">
    <molecule id="P51991-1"/>
    <property type="protein sequence ID" value="ENSP00000504152.1"/>
    <property type="gene ID" value="ENSG00000170144.23"/>
</dbReference>
<dbReference type="GeneID" id="220988"/>
<dbReference type="KEGG" id="hsa:220988"/>
<dbReference type="MANE-Select" id="ENST00000392524.7">
    <property type="protein sequence ID" value="ENSP00000376309.2"/>
    <property type="RefSeq nucleotide sequence ID" value="NM_194247.4"/>
    <property type="RefSeq protein sequence ID" value="NP_919223.1"/>
</dbReference>
<dbReference type="UCSC" id="uc002ulb.2">
    <molecule id="P51991-1"/>
    <property type="organism name" value="human"/>
</dbReference>
<dbReference type="AGR" id="HGNC:24941"/>
<dbReference type="CTD" id="220988"/>
<dbReference type="DisGeNET" id="220988"/>
<dbReference type="GeneCards" id="HNRNPA3"/>
<dbReference type="HGNC" id="HGNC:24941">
    <property type="gene designation" value="HNRNPA3"/>
</dbReference>
<dbReference type="HPA" id="ENSG00000170144">
    <property type="expression patterns" value="Low tissue specificity"/>
</dbReference>
<dbReference type="MIM" id="605372">
    <property type="type" value="gene"/>
</dbReference>
<dbReference type="neXtProt" id="NX_P51991"/>
<dbReference type="OpenTargets" id="ENSG00000170144"/>
<dbReference type="PharmGKB" id="PA162391169"/>
<dbReference type="VEuPathDB" id="HostDB:ENSG00000170144"/>
<dbReference type="eggNOG" id="KOG0118">
    <property type="taxonomic scope" value="Eukaryota"/>
</dbReference>
<dbReference type="GeneTree" id="ENSGT00940000153147"/>
<dbReference type="HOGENOM" id="CLU_012062_1_0_1"/>
<dbReference type="InParanoid" id="P51991"/>
<dbReference type="OMA" id="HCEAKRA"/>
<dbReference type="OrthoDB" id="1875751at2759"/>
<dbReference type="PAN-GO" id="P51991">
    <property type="GO annotations" value="3 GO annotations based on evolutionary models"/>
</dbReference>
<dbReference type="PhylomeDB" id="P51991"/>
<dbReference type="TreeFam" id="TF314808"/>
<dbReference type="PathwayCommons" id="P51991"/>
<dbReference type="Reactome" id="R-HSA-72163">
    <property type="pathway name" value="mRNA Splicing - Major Pathway"/>
</dbReference>
<dbReference type="Reactome" id="R-HSA-72203">
    <property type="pathway name" value="Processing of Capped Intron-Containing Pre-mRNA"/>
</dbReference>
<dbReference type="SignaLink" id="P51991"/>
<dbReference type="SIGNOR" id="P51991"/>
<dbReference type="BioGRID-ORCS" id="220988">
    <property type="hits" value="55 hits in 1153 CRISPR screens"/>
</dbReference>
<dbReference type="CD-CODE" id="91857CE7">
    <property type="entry name" value="Nucleolus"/>
</dbReference>
<dbReference type="CD-CODE" id="A3E85EF1">
    <property type="entry name" value="Synthetic Condensate 000117"/>
</dbReference>
<dbReference type="CD-CODE" id="DEE660B4">
    <property type="entry name" value="Stress granule"/>
</dbReference>
<dbReference type="ChiTaRS" id="HNRNPA3">
    <property type="organism name" value="human"/>
</dbReference>
<dbReference type="GeneWiki" id="HNRPA3"/>
<dbReference type="GenomeRNAi" id="220988"/>
<dbReference type="Pharos" id="P51991">
    <property type="development level" value="Tbio"/>
</dbReference>
<dbReference type="PRO" id="PR:P51991"/>
<dbReference type="Proteomes" id="UP000005640">
    <property type="component" value="Chromosome 2"/>
</dbReference>
<dbReference type="RNAct" id="P51991">
    <property type="molecule type" value="protein"/>
</dbReference>
<dbReference type="Bgee" id="ENSG00000170144">
    <property type="expression patterns" value="Expressed in ganglionic eminence and 213 other cell types or tissues"/>
</dbReference>
<dbReference type="ExpressionAtlas" id="P51991">
    <property type="expression patterns" value="baseline and differential"/>
</dbReference>
<dbReference type="GO" id="GO:0071013">
    <property type="term" value="C:catalytic step 2 spliceosome"/>
    <property type="evidence" value="ECO:0000314"/>
    <property type="project" value="UniProtKB"/>
</dbReference>
<dbReference type="GO" id="GO:0005654">
    <property type="term" value="C:nucleoplasm"/>
    <property type="evidence" value="ECO:0000304"/>
    <property type="project" value="Reactome"/>
</dbReference>
<dbReference type="GO" id="GO:0005634">
    <property type="term" value="C:nucleus"/>
    <property type="evidence" value="ECO:0000314"/>
    <property type="project" value="UniProtKB"/>
</dbReference>
<dbReference type="GO" id="GO:1990904">
    <property type="term" value="C:ribonucleoprotein complex"/>
    <property type="evidence" value="ECO:0000304"/>
    <property type="project" value="ProtInc"/>
</dbReference>
<dbReference type="GO" id="GO:0003723">
    <property type="term" value="F:RNA binding"/>
    <property type="evidence" value="ECO:0007005"/>
    <property type="project" value="UniProtKB"/>
</dbReference>
<dbReference type="GO" id="GO:0000398">
    <property type="term" value="P:mRNA splicing, via spliceosome"/>
    <property type="evidence" value="ECO:0000318"/>
    <property type="project" value="GO_Central"/>
</dbReference>
<dbReference type="CDD" id="cd12578">
    <property type="entry name" value="RRM1_hnRNPA_like"/>
    <property type="match status" value="1"/>
</dbReference>
<dbReference type="CDD" id="cd12582">
    <property type="entry name" value="RRM2_hnRNPA3"/>
    <property type="match status" value="1"/>
</dbReference>
<dbReference type="FunFam" id="3.30.70.330:FF:000158">
    <property type="entry name" value="heterogeneous nuclear ribonucleoprotein A3 isoform X1"/>
    <property type="match status" value="1"/>
</dbReference>
<dbReference type="FunFam" id="3.30.70.330:FF:000350">
    <property type="entry name" value="heterogeneous nuclear ribonucleoprotein A3 isoform X1"/>
    <property type="match status" value="1"/>
</dbReference>
<dbReference type="Gene3D" id="3.30.70.330">
    <property type="match status" value="2"/>
</dbReference>
<dbReference type="InterPro" id="IPR034516">
    <property type="entry name" value="hnRNPA1/3_RRM2"/>
</dbReference>
<dbReference type="InterPro" id="IPR012677">
    <property type="entry name" value="Nucleotide-bd_a/b_plait_sf"/>
</dbReference>
<dbReference type="InterPro" id="IPR035979">
    <property type="entry name" value="RBD_domain_sf"/>
</dbReference>
<dbReference type="InterPro" id="IPR000504">
    <property type="entry name" value="RRM_dom"/>
</dbReference>
<dbReference type="PANTHER" id="PTHR48026:SF12">
    <property type="entry name" value="HETEROGENEOUS NUCLEAR RIBONUCLEOPROTEIN A3"/>
    <property type="match status" value="1"/>
</dbReference>
<dbReference type="PANTHER" id="PTHR48026">
    <property type="entry name" value="HOMOLOGOUS TO DROSOPHILA SQD (SQUID) PROTEIN"/>
    <property type="match status" value="1"/>
</dbReference>
<dbReference type="Pfam" id="PF00076">
    <property type="entry name" value="RRM_1"/>
    <property type="match status" value="2"/>
</dbReference>
<dbReference type="SMART" id="SM00360">
    <property type="entry name" value="RRM"/>
    <property type="match status" value="2"/>
</dbReference>
<dbReference type="SUPFAM" id="SSF54928">
    <property type="entry name" value="RNA-binding domain, RBD"/>
    <property type="match status" value="2"/>
</dbReference>
<dbReference type="PROSITE" id="PS50102">
    <property type="entry name" value="RRM"/>
    <property type="match status" value="2"/>
</dbReference>
<keyword id="KW-0007">Acetylation</keyword>
<keyword id="KW-0025">Alternative splicing</keyword>
<keyword id="KW-0903">Direct protein sequencing</keyword>
<keyword id="KW-1017">Isopeptide bond</keyword>
<keyword id="KW-0488">Methylation</keyword>
<keyword id="KW-0507">mRNA processing</keyword>
<keyword id="KW-0508">mRNA splicing</keyword>
<keyword id="KW-0539">Nucleus</keyword>
<keyword id="KW-0597">Phosphoprotein</keyword>
<keyword id="KW-1267">Proteomics identification</keyword>
<keyword id="KW-1185">Reference proteome</keyword>
<keyword id="KW-0677">Repeat</keyword>
<keyword id="KW-0687">Ribonucleoprotein</keyword>
<keyword id="KW-0694">RNA-binding</keyword>
<keyword id="KW-0747">Spliceosome</keyword>
<keyword id="KW-0832">Ubl conjugation</keyword>
<protein>
    <recommendedName>
        <fullName>Heterogeneous nuclear ribonucleoprotein A3</fullName>
        <shortName>hnRNP A3</shortName>
    </recommendedName>
</protein>